<sequence>MPQLDTSTWFITILSMLMTLFILFQLKLSKHIYYPTPEPKFSKTHKQNTPWETKWKKIYLPLLLPQQ</sequence>
<organism>
    <name type="scientific">Vicugna pacos</name>
    <name type="common">Alpaca</name>
    <name type="synonym">Lama pacos</name>
    <dbReference type="NCBI Taxonomy" id="30538"/>
    <lineage>
        <taxon>Eukaryota</taxon>
        <taxon>Metazoa</taxon>
        <taxon>Chordata</taxon>
        <taxon>Craniata</taxon>
        <taxon>Vertebrata</taxon>
        <taxon>Euteleostomi</taxon>
        <taxon>Mammalia</taxon>
        <taxon>Eutheria</taxon>
        <taxon>Laurasiatheria</taxon>
        <taxon>Artiodactyla</taxon>
        <taxon>Tylopoda</taxon>
        <taxon>Camelidae</taxon>
        <taxon>Vicugna</taxon>
    </lineage>
</organism>
<keyword id="KW-0007">Acetylation</keyword>
<keyword id="KW-0066">ATP synthesis</keyword>
<keyword id="KW-0138">CF(0)</keyword>
<keyword id="KW-0375">Hydrogen ion transport</keyword>
<keyword id="KW-0406">Ion transport</keyword>
<keyword id="KW-0472">Membrane</keyword>
<keyword id="KW-0496">Mitochondrion</keyword>
<keyword id="KW-1185">Reference proteome</keyword>
<keyword id="KW-0812">Transmembrane</keyword>
<keyword id="KW-1133">Transmembrane helix</keyword>
<keyword id="KW-0813">Transport</keyword>
<proteinExistence type="inferred from homology"/>
<protein>
    <recommendedName>
        <fullName>ATP synthase protein 8</fullName>
    </recommendedName>
    <alternativeName>
        <fullName>A6L</fullName>
    </alternativeName>
    <alternativeName>
        <fullName>F-ATPase subunit 8</fullName>
    </alternativeName>
</protein>
<feature type="chain" id="PRO_0000195540" description="ATP synthase protein 8">
    <location>
        <begin position="1"/>
        <end position="67"/>
    </location>
</feature>
<feature type="transmembrane region" description="Helical" evidence="4">
    <location>
        <begin position="8"/>
        <end position="24"/>
    </location>
</feature>
<feature type="modified residue" description="N6-acetyllysine; alternate" evidence="3">
    <location>
        <position position="54"/>
    </location>
</feature>
<feature type="modified residue" description="N6-succinyllysine; alternate" evidence="3">
    <location>
        <position position="54"/>
    </location>
</feature>
<feature type="modified residue" description="N6-acetyllysine" evidence="3">
    <location>
        <position position="57"/>
    </location>
</feature>
<accession>Q9MEI6</accession>
<dbReference type="EMBL" id="Y19184">
    <property type="protein sequence ID" value="CAC00506.1"/>
    <property type="molecule type" value="Genomic_DNA"/>
</dbReference>
<dbReference type="RefSeq" id="NP_063905.1">
    <property type="nucleotide sequence ID" value="NC_002504.1"/>
</dbReference>
<dbReference type="SMR" id="Q9MEI6"/>
<dbReference type="GeneID" id="809430"/>
<dbReference type="KEGG" id="vpc:809430"/>
<dbReference type="CTD" id="4509"/>
<dbReference type="HOGENOM" id="CLU_2811757_0_0_1"/>
<dbReference type="OMA" id="LDTSTWF"/>
<dbReference type="OrthoDB" id="44964at91561"/>
<dbReference type="Proteomes" id="UP000504605">
    <property type="component" value="Mitochondrion MT"/>
</dbReference>
<dbReference type="GO" id="GO:0031966">
    <property type="term" value="C:mitochondrial membrane"/>
    <property type="evidence" value="ECO:0007669"/>
    <property type="project" value="UniProtKB-SubCell"/>
</dbReference>
<dbReference type="GO" id="GO:0045259">
    <property type="term" value="C:proton-transporting ATP synthase complex"/>
    <property type="evidence" value="ECO:0000250"/>
    <property type="project" value="UniProtKB"/>
</dbReference>
<dbReference type="GO" id="GO:0015078">
    <property type="term" value="F:proton transmembrane transporter activity"/>
    <property type="evidence" value="ECO:0007669"/>
    <property type="project" value="InterPro"/>
</dbReference>
<dbReference type="GO" id="GO:0015986">
    <property type="term" value="P:proton motive force-driven ATP synthesis"/>
    <property type="evidence" value="ECO:0007669"/>
    <property type="project" value="InterPro"/>
</dbReference>
<dbReference type="InterPro" id="IPR039017">
    <property type="entry name" value="ATP8_mammal"/>
</dbReference>
<dbReference type="InterPro" id="IPR001421">
    <property type="entry name" value="ATP8_metazoa"/>
</dbReference>
<dbReference type="PANTHER" id="PTHR13722">
    <property type="entry name" value="ATP SYNTHASE PROTEIN 8"/>
    <property type="match status" value="1"/>
</dbReference>
<dbReference type="PANTHER" id="PTHR13722:SF0">
    <property type="entry name" value="ATP SYNTHASE PROTEIN 8"/>
    <property type="match status" value="1"/>
</dbReference>
<dbReference type="Pfam" id="PF00895">
    <property type="entry name" value="ATP-synt_8"/>
    <property type="match status" value="1"/>
</dbReference>
<comment type="function">
    <text evidence="1">Mitochondrial membrane ATP synthase (F(1)F(0) ATP synthase or Complex V) produces ATP from ADP in the presence of a proton gradient across the membrane which is generated by electron transport complexes of the respiratory chain. F-type ATPases consist of two structural domains, F(1) - containing the extramembraneous catalytic core and F(0) - containing the membrane proton channel, linked together by a central stalk and a peripheral stalk. During catalysis, ATP synthesis in the catalytic domain of F(1) is coupled via a rotary mechanism of the central stalk subunits to proton translocation. Part of the complex F(0) domain. Minor subunit located with subunit a in the membrane (By similarity).</text>
</comment>
<comment type="subunit">
    <text evidence="2">F-type ATPases have 2 components, CF(1) - the catalytic core - and CF(0) - the membrane proton channel. Component of an ATP synthase complex composed of ATP5PB, ATP5MC1, ATP5F1E, ATP5PD, ATP5ME, ATP5PF, ATP5MF, MT-ATP6, MT-ATP8, ATP5F1A, ATP5F1B, ATP5F1D, ATP5F1C, ATP5PO, ATP5MG, ATP5MK and ATP5MJ (By similarity). Interacts with PRICKLE3 (By similarity).</text>
</comment>
<comment type="subcellular location">
    <subcellularLocation>
        <location>Mitochondrion membrane</location>
        <topology>Single-pass membrane protein</topology>
    </subcellularLocation>
</comment>
<comment type="similarity">
    <text evidence="5">Belongs to the ATPase protein 8 family.</text>
</comment>
<evidence type="ECO:0000250" key="1"/>
<evidence type="ECO:0000250" key="2">
    <source>
        <dbReference type="UniProtKB" id="P03928"/>
    </source>
</evidence>
<evidence type="ECO:0000250" key="3">
    <source>
        <dbReference type="UniProtKB" id="P03930"/>
    </source>
</evidence>
<evidence type="ECO:0000255" key="4"/>
<evidence type="ECO:0000305" key="5"/>
<geneLocation type="mitochondrion"/>
<reference key="1">
    <citation type="journal article" date="2000" name="Zool. Scr.">
        <title>Subordinal artiodactyl relationships in the light of phylogenetic analysis of 12 mitochondrial protein-coding genes.</title>
        <authorList>
            <person name="Ursing B.M."/>
            <person name="Slack K.E."/>
            <person name="Arnason U."/>
        </authorList>
    </citation>
    <scope>NUCLEOTIDE SEQUENCE [GENOMIC DNA]</scope>
</reference>
<gene>
    <name type="primary">MT-ATP8</name>
    <name type="synonym">ATP8</name>
    <name type="synonym">ATPASE8</name>
    <name type="synonym">MTATP8</name>
</gene>
<name>ATP8_VICPA</name>